<evidence type="ECO:0000250" key="1"/>
<evidence type="ECO:0000255" key="2">
    <source>
        <dbReference type="PROSITE-ProRule" id="PRU00448"/>
    </source>
</evidence>
<evidence type="ECO:0000305" key="3"/>
<evidence type="ECO:0000312" key="4">
    <source>
        <dbReference type="EMBL" id="EEE64192.1"/>
    </source>
</evidence>
<keyword id="KW-0106">Calcium</keyword>
<keyword id="KW-0479">Metal-binding</keyword>
<keyword id="KW-1185">Reference proteome</keyword>
<keyword id="KW-0677">Repeat</keyword>
<name>CML9_ORYSJ</name>
<organism>
    <name type="scientific">Oryza sativa subsp. japonica</name>
    <name type="common">Rice</name>
    <dbReference type="NCBI Taxonomy" id="39947"/>
    <lineage>
        <taxon>Eukaryota</taxon>
        <taxon>Viridiplantae</taxon>
        <taxon>Streptophyta</taxon>
        <taxon>Embryophyta</taxon>
        <taxon>Tracheophyta</taxon>
        <taxon>Spermatophyta</taxon>
        <taxon>Magnoliopsida</taxon>
        <taxon>Liliopsida</taxon>
        <taxon>Poales</taxon>
        <taxon>Poaceae</taxon>
        <taxon>BOP clade</taxon>
        <taxon>Oryzoideae</taxon>
        <taxon>Oryzeae</taxon>
        <taxon>Oryzinae</taxon>
        <taxon>Oryza</taxon>
        <taxon>Oryza sativa</taxon>
    </lineage>
</organism>
<proteinExistence type="evidence at transcript level"/>
<accession>Q6F334</accession>
<accession>B7EXP8</accession>
<comment type="function">
    <text evidence="1">Potential calcium sensor.</text>
</comment>
<comment type="caution">
    <text evidence="3">Although assigned as a calmodulin family member by PubMed:17263873, it only contains EF-hand domains.</text>
</comment>
<sequence>MAAKLTQEQVDECREIFDLFDSDEDGRIAAGELVTALRSLGQNVDEAEARRFLADATASGGGGGGGGDIDFAAFLSVAARKMRRGATEKELAACLDVFDDARSGVIPAEQLRQAMVSHGDRLTEEEADEMVRKADPAGEGRVEYKEFVKVLMNNK</sequence>
<reference key="1">
    <citation type="journal article" date="2005" name="Mol. Genet. Genomics">
        <title>A fine physical map of the rice chromosome 5.</title>
        <authorList>
            <person name="Cheng C.-H."/>
            <person name="Chung M.C."/>
            <person name="Liu S.-M."/>
            <person name="Chen S.-K."/>
            <person name="Kao F.Y."/>
            <person name="Lin S.-J."/>
            <person name="Hsiao S.-H."/>
            <person name="Tseng I.C."/>
            <person name="Hsing Y.-I.C."/>
            <person name="Wu H.-P."/>
            <person name="Chen C.-S."/>
            <person name="Shaw J.-F."/>
            <person name="Wu J."/>
            <person name="Matsumoto T."/>
            <person name="Sasaki T."/>
            <person name="Chen H.-C."/>
            <person name="Chow T.-Y."/>
        </authorList>
    </citation>
    <scope>NUCLEOTIDE SEQUENCE [LARGE SCALE GENOMIC DNA]</scope>
    <source>
        <strain>cv. Nipponbare</strain>
    </source>
</reference>
<reference key="2">
    <citation type="journal article" date="2005" name="Nature">
        <title>The map-based sequence of the rice genome.</title>
        <authorList>
            <consortium name="International rice genome sequencing project (IRGSP)"/>
        </authorList>
    </citation>
    <scope>NUCLEOTIDE SEQUENCE [LARGE SCALE GENOMIC DNA]</scope>
    <source>
        <strain>cv. Nipponbare</strain>
    </source>
</reference>
<reference key="3">
    <citation type="journal article" date="2008" name="Nucleic Acids Res.">
        <title>The rice annotation project database (RAP-DB): 2008 update.</title>
        <authorList>
            <consortium name="The rice annotation project (RAP)"/>
        </authorList>
    </citation>
    <scope>GENOME REANNOTATION</scope>
    <source>
        <strain>cv. Nipponbare</strain>
    </source>
</reference>
<reference key="4">
    <citation type="journal article" date="2013" name="Rice">
        <title>Improvement of the Oryza sativa Nipponbare reference genome using next generation sequence and optical map data.</title>
        <authorList>
            <person name="Kawahara Y."/>
            <person name="de la Bastide M."/>
            <person name="Hamilton J.P."/>
            <person name="Kanamori H."/>
            <person name="McCombie W.R."/>
            <person name="Ouyang S."/>
            <person name="Schwartz D.C."/>
            <person name="Tanaka T."/>
            <person name="Wu J."/>
            <person name="Zhou S."/>
            <person name="Childs K.L."/>
            <person name="Davidson R.M."/>
            <person name="Lin H."/>
            <person name="Quesada-Ocampo L."/>
            <person name="Vaillancourt B."/>
            <person name="Sakai H."/>
            <person name="Lee S.S."/>
            <person name="Kim J."/>
            <person name="Numa H."/>
            <person name="Itoh T."/>
            <person name="Buell C.R."/>
            <person name="Matsumoto T."/>
        </authorList>
    </citation>
    <scope>GENOME REANNOTATION</scope>
    <source>
        <strain>cv. Nipponbare</strain>
    </source>
</reference>
<reference key="5">
    <citation type="journal article" date="2005" name="PLoS Biol.">
        <title>The genomes of Oryza sativa: a history of duplications.</title>
        <authorList>
            <person name="Yu J."/>
            <person name="Wang J."/>
            <person name="Lin W."/>
            <person name="Li S."/>
            <person name="Li H."/>
            <person name="Zhou J."/>
            <person name="Ni P."/>
            <person name="Dong W."/>
            <person name="Hu S."/>
            <person name="Zeng C."/>
            <person name="Zhang J."/>
            <person name="Zhang Y."/>
            <person name="Li R."/>
            <person name="Xu Z."/>
            <person name="Li S."/>
            <person name="Li X."/>
            <person name="Zheng H."/>
            <person name="Cong L."/>
            <person name="Lin L."/>
            <person name="Yin J."/>
            <person name="Geng J."/>
            <person name="Li G."/>
            <person name="Shi J."/>
            <person name="Liu J."/>
            <person name="Lv H."/>
            <person name="Li J."/>
            <person name="Wang J."/>
            <person name="Deng Y."/>
            <person name="Ran L."/>
            <person name="Shi X."/>
            <person name="Wang X."/>
            <person name="Wu Q."/>
            <person name="Li C."/>
            <person name="Ren X."/>
            <person name="Wang J."/>
            <person name="Wang X."/>
            <person name="Li D."/>
            <person name="Liu D."/>
            <person name="Zhang X."/>
            <person name="Ji Z."/>
            <person name="Zhao W."/>
            <person name="Sun Y."/>
            <person name="Zhang Z."/>
            <person name="Bao J."/>
            <person name="Han Y."/>
            <person name="Dong L."/>
            <person name="Ji J."/>
            <person name="Chen P."/>
            <person name="Wu S."/>
            <person name="Liu J."/>
            <person name="Xiao Y."/>
            <person name="Bu D."/>
            <person name="Tan J."/>
            <person name="Yang L."/>
            <person name="Ye C."/>
            <person name="Zhang J."/>
            <person name="Xu J."/>
            <person name="Zhou Y."/>
            <person name="Yu Y."/>
            <person name="Zhang B."/>
            <person name="Zhuang S."/>
            <person name="Wei H."/>
            <person name="Liu B."/>
            <person name="Lei M."/>
            <person name="Yu H."/>
            <person name="Li Y."/>
            <person name="Xu H."/>
            <person name="Wei S."/>
            <person name="He X."/>
            <person name="Fang L."/>
            <person name="Zhang Z."/>
            <person name="Zhang Y."/>
            <person name="Huang X."/>
            <person name="Su Z."/>
            <person name="Tong W."/>
            <person name="Li J."/>
            <person name="Tong Z."/>
            <person name="Li S."/>
            <person name="Ye J."/>
            <person name="Wang L."/>
            <person name="Fang L."/>
            <person name="Lei T."/>
            <person name="Chen C.-S."/>
            <person name="Chen H.-C."/>
            <person name="Xu Z."/>
            <person name="Li H."/>
            <person name="Huang H."/>
            <person name="Zhang F."/>
            <person name="Xu H."/>
            <person name="Li N."/>
            <person name="Zhao C."/>
            <person name="Li S."/>
            <person name="Dong L."/>
            <person name="Huang Y."/>
            <person name="Li L."/>
            <person name="Xi Y."/>
            <person name="Qi Q."/>
            <person name="Li W."/>
            <person name="Zhang B."/>
            <person name="Hu W."/>
            <person name="Zhang Y."/>
            <person name="Tian X."/>
            <person name="Jiao Y."/>
            <person name="Liang X."/>
            <person name="Jin J."/>
            <person name="Gao L."/>
            <person name="Zheng W."/>
            <person name="Hao B."/>
            <person name="Liu S.-M."/>
            <person name="Wang W."/>
            <person name="Yuan L."/>
            <person name="Cao M."/>
            <person name="McDermott J."/>
            <person name="Samudrala R."/>
            <person name="Wang J."/>
            <person name="Wong G.K.-S."/>
            <person name="Yang H."/>
        </authorList>
    </citation>
    <scope>NUCLEOTIDE SEQUENCE [LARGE SCALE GENOMIC DNA]</scope>
    <source>
        <strain>cv. Nipponbare</strain>
    </source>
</reference>
<reference key="6">
    <citation type="journal article" date="2003" name="Science">
        <title>Collection, mapping, and annotation of over 28,000 cDNA clones from japonica rice.</title>
        <authorList>
            <consortium name="The rice full-length cDNA consortium"/>
        </authorList>
    </citation>
    <scope>NUCLEOTIDE SEQUENCE [LARGE SCALE MRNA]</scope>
    <source>
        <strain>cv. Nipponbare</strain>
    </source>
</reference>
<reference key="7">
    <citation type="journal article" date="2007" name="BMC Plant Biol.">
        <title>Genome-wide identification and analyses of the rice calmodulin and related potential calcium sensor proteins.</title>
        <authorList>
            <person name="Boonburapong B."/>
            <person name="Buaboocha T."/>
        </authorList>
    </citation>
    <scope>GENE FAMILY</scope>
    <scope>NOMENCLATURE</scope>
</reference>
<protein>
    <recommendedName>
        <fullName>Probable calcium-binding protein CML9</fullName>
    </recommendedName>
    <alternativeName>
        <fullName>Calmodulin-like protein 9</fullName>
    </alternativeName>
</protein>
<feature type="chain" id="PRO_0000338424" description="Probable calcium-binding protein CML9">
    <location>
        <begin position="1"/>
        <end position="155"/>
    </location>
</feature>
<feature type="domain" description="EF-hand 1" evidence="2">
    <location>
        <begin position="8"/>
        <end position="43"/>
    </location>
</feature>
<feature type="domain" description="EF-hand 2" evidence="2">
    <location>
        <begin position="86"/>
        <end position="121"/>
    </location>
</feature>
<feature type="domain" description="EF-hand 3" evidence="2">
    <location>
        <begin position="122"/>
        <end position="155"/>
    </location>
</feature>
<feature type="binding site" evidence="2">
    <location>
        <position position="21"/>
    </location>
    <ligand>
        <name>Ca(2+)</name>
        <dbReference type="ChEBI" id="CHEBI:29108"/>
    </ligand>
</feature>
<feature type="binding site" evidence="2">
    <location>
        <position position="23"/>
    </location>
    <ligand>
        <name>Ca(2+)</name>
        <dbReference type="ChEBI" id="CHEBI:29108"/>
    </ligand>
</feature>
<feature type="binding site" evidence="2">
    <location>
        <position position="25"/>
    </location>
    <ligand>
        <name>Ca(2+)</name>
        <dbReference type="ChEBI" id="CHEBI:29108"/>
    </ligand>
</feature>
<feature type="binding site" evidence="2">
    <location>
        <position position="27"/>
    </location>
    <ligand>
        <name>Ca(2+)</name>
        <dbReference type="ChEBI" id="CHEBI:29108"/>
    </ligand>
</feature>
<feature type="binding site" evidence="2">
    <location>
        <position position="32"/>
    </location>
    <ligand>
        <name>Ca(2+)</name>
        <dbReference type="ChEBI" id="CHEBI:29108"/>
    </ligand>
</feature>
<gene>
    <name type="primary">CML9</name>
    <name type="ordered locus">Os05g0491000</name>
    <name type="ordered locus">LOC_Os05g41200</name>
    <name type="ORF">OsJ_018254</name>
    <name evidence="4" type="ORF">OsJ_19024</name>
</gene>
<dbReference type="EMBL" id="AC129718">
    <property type="protein sequence ID" value="AAT69642.1"/>
    <property type="molecule type" value="Genomic_DNA"/>
</dbReference>
<dbReference type="EMBL" id="AP008211">
    <property type="protein sequence ID" value="BAF17820.1"/>
    <property type="molecule type" value="Genomic_DNA"/>
</dbReference>
<dbReference type="EMBL" id="AP014961">
    <property type="protein sequence ID" value="BAS94662.1"/>
    <property type="molecule type" value="Genomic_DNA"/>
</dbReference>
<dbReference type="EMBL" id="CM000142">
    <property type="protein sequence ID" value="EAZ34771.1"/>
    <property type="molecule type" value="Genomic_DNA"/>
</dbReference>
<dbReference type="EMBL" id="CM000142">
    <property type="protein sequence ID" value="EEE64192.1"/>
    <property type="molecule type" value="Genomic_DNA"/>
</dbReference>
<dbReference type="EMBL" id="AK105230">
    <property type="protein sequence ID" value="BAG97145.1"/>
    <property type="molecule type" value="mRNA"/>
</dbReference>
<dbReference type="RefSeq" id="XP_015639158.1">
    <property type="nucleotide sequence ID" value="XM_015783672.1"/>
</dbReference>
<dbReference type="RefSeq" id="XP_015639160.1">
    <property type="nucleotide sequence ID" value="XM_015783674.1"/>
</dbReference>
<dbReference type="SMR" id="Q6F334"/>
<dbReference type="FunCoup" id="Q6F334">
    <property type="interactions" value="242"/>
</dbReference>
<dbReference type="STRING" id="39947.Q6F334"/>
<dbReference type="PaxDb" id="39947-Q6F334"/>
<dbReference type="EnsemblPlants" id="Os05t0491000-01">
    <property type="protein sequence ID" value="Os05t0491000-01"/>
    <property type="gene ID" value="Os05g0491000"/>
</dbReference>
<dbReference type="GeneID" id="4339171"/>
<dbReference type="Gramene" id="Os05t0491000-01">
    <property type="protein sequence ID" value="Os05t0491000-01"/>
    <property type="gene ID" value="Os05g0491000"/>
</dbReference>
<dbReference type="KEGG" id="dosa:Os05g0491000"/>
<dbReference type="KEGG" id="osa:4339171"/>
<dbReference type="eggNOG" id="KOG0027">
    <property type="taxonomic scope" value="Eukaryota"/>
</dbReference>
<dbReference type="HOGENOM" id="CLU_061288_2_0_1"/>
<dbReference type="InParanoid" id="Q6F334"/>
<dbReference type="OMA" id="QIDECKE"/>
<dbReference type="OrthoDB" id="26525at2759"/>
<dbReference type="Proteomes" id="UP000000763">
    <property type="component" value="Chromosome 5"/>
</dbReference>
<dbReference type="Proteomes" id="UP000007752">
    <property type="component" value="Chromosome 5"/>
</dbReference>
<dbReference type="Proteomes" id="UP000059680">
    <property type="component" value="Chromosome 5"/>
</dbReference>
<dbReference type="GO" id="GO:0005737">
    <property type="term" value="C:cytoplasm"/>
    <property type="evidence" value="ECO:0000318"/>
    <property type="project" value="GO_Central"/>
</dbReference>
<dbReference type="GO" id="GO:0005509">
    <property type="term" value="F:calcium ion binding"/>
    <property type="evidence" value="ECO:0000318"/>
    <property type="project" value="GO_Central"/>
</dbReference>
<dbReference type="GO" id="GO:0030234">
    <property type="term" value="F:enzyme regulator activity"/>
    <property type="evidence" value="ECO:0000318"/>
    <property type="project" value="GO_Central"/>
</dbReference>
<dbReference type="CDD" id="cd00051">
    <property type="entry name" value="EFh"/>
    <property type="match status" value="2"/>
</dbReference>
<dbReference type="FunFam" id="1.10.238.10:FF:000477">
    <property type="entry name" value="Myosin 1 light chain cam2"/>
    <property type="match status" value="1"/>
</dbReference>
<dbReference type="FunFam" id="1.10.238.10:FF:000483">
    <property type="entry name" value="Probable calcium-binding protein CML9"/>
    <property type="match status" value="1"/>
</dbReference>
<dbReference type="Gene3D" id="1.10.238.10">
    <property type="entry name" value="EF-hand"/>
    <property type="match status" value="2"/>
</dbReference>
<dbReference type="InterPro" id="IPR050230">
    <property type="entry name" value="CALM/Myosin/TropC-like"/>
</dbReference>
<dbReference type="InterPro" id="IPR011992">
    <property type="entry name" value="EF-hand-dom_pair"/>
</dbReference>
<dbReference type="InterPro" id="IPR018247">
    <property type="entry name" value="EF_Hand_1_Ca_BS"/>
</dbReference>
<dbReference type="InterPro" id="IPR002048">
    <property type="entry name" value="EF_hand_dom"/>
</dbReference>
<dbReference type="PANTHER" id="PTHR23048:SF51">
    <property type="entry name" value="EF-HAND DOMAIN-CONTAINING PROTEIN"/>
    <property type="match status" value="1"/>
</dbReference>
<dbReference type="PANTHER" id="PTHR23048">
    <property type="entry name" value="MYOSIN LIGHT CHAIN 1, 3"/>
    <property type="match status" value="1"/>
</dbReference>
<dbReference type="Pfam" id="PF13405">
    <property type="entry name" value="EF-hand_6"/>
    <property type="match status" value="1"/>
</dbReference>
<dbReference type="Pfam" id="PF13499">
    <property type="entry name" value="EF-hand_7"/>
    <property type="match status" value="1"/>
</dbReference>
<dbReference type="SMART" id="SM00054">
    <property type="entry name" value="EFh"/>
    <property type="match status" value="3"/>
</dbReference>
<dbReference type="SUPFAM" id="SSF47473">
    <property type="entry name" value="EF-hand"/>
    <property type="match status" value="1"/>
</dbReference>
<dbReference type="PROSITE" id="PS00018">
    <property type="entry name" value="EF_HAND_1"/>
    <property type="match status" value="1"/>
</dbReference>
<dbReference type="PROSITE" id="PS50222">
    <property type="entry name" value="EF_HAND_2"/>
    <property type="match status" value="3"/>
</dbReference>